<name>AMPA_BACAN</name>
<comment type="function">
    <text evidence="1">Presumably involved in the processing and regular turnover of intracellular proteins. Catalyzes the removal of unsubstituted N-terminal amino acids from various peptides.</text>
</comment>
<comment type="catalytic activity">
    <reaction evidence="1">
        <text>Release of an N-terminal amino acid, Xaa-|-Yaa-, in which Xaa is preferably Leu, but may be other amino acids including Pro although not Arg or Lys, and Yaa may be Pro. Amino acid amides and methyl esters are also readily hydrolyzed, but rates on arylamides are exceedingly low.</text>
        <dbReference type="EC" id="3.4.11.1"/>
    </reaction>
</comment>
<comment type="catalytic activity">
    <reaction evidence="1">
        <text>Release of an N-terminal amino acid, preferentially leucine, but not glutamic or aspartic acids.</text>
        <dbReference type="EC" id="3.4.11.10"/>
    </reaction>
</comment>
<comment type="cofactor">
    <cofactor evidence="1">
        <name>Mn(2+)</name>
        <dbReference type="ChEBI" id="CHEBI:29035"/>
    </cofactor>
    <text evidence="1">Binds 2 manganese ions per subunit.</text>
</comment>
<comment type="subcellular location">
    <subcellularLocation>
        <location evidence="1">Cytoplasm</location>
    </subcellularLocation>
</comment>
<comment type="similarity">
    <text evidence="1">Belongs to the peptidase M17 family.</text>
</comment>
<protein>
    <recommendedName>
        <fullName evidence="1">Probable cytosol aminopeptidase</fullName>
        <ecNumber evidence="1">3.4.11.1</ecNumber>
    </recommendedName>
    <alternativeName>
        <fullName evidence="1">Leucine aminopeptidase</fullName>
        <shortName evidence="1">LAP</shortName>
        <ecNumber evidence="1">3.4.11.10</ecNumber>
    </alternativeName>
    <alternativeName>
        <fullName evidence="1">Leucyl aminopeptidase</fullName>
    </alternativeName>
</protein>
<feature type="chain" id="PRO_0000165718" description="Probable cytosol aminopeptidase">
    <location>
        <begin position="1"/>
        <end position="494"/>
    </location>
</feature>
<feature type="active site" evidence="1">
    <location>
        <position position="272"/>
    </location>
</feature>
<feature type="active site" evidence="1">
    <location>
        <position position="346"/>
    </location>
</feature>
<feature type="binding site" evidence="1">
    <location>
        <position position="260"/>
    </location>
    <ligand>
        <name>Mn(2+)</name>
        <dbReference type="ChEBI" id="CHEBI:29035"/>
        <label>2</label>
    </ligand>
</feature>
<feature type="binding site" evidence="1">
    <location>
        <position position="265"/>
    </location>
    <ligand>
        <name>Mn(2+)</name>
        <dbReference type="ChEBI" id="CHEBI:29035"/>
        <label>1</label>
    </ligand>
</feature>
<feature type="binding site" evidence="1">
    <location>
        <position position="265"/>
    </location>
    <ligand>
        <name>Mn(2+)</name>
        <dbReference type="ChEBI" id="CHEBI:29035"/>
        <label>2</label>
    </ligand>
</feature>
<feature type="binding site" evidence="1">
    <location>
        <position position="283"/>
    </location>
    <ligand>
        <name>Mn(2+)</name>
        <dbReference type="ChEBI" id="CHEBI:29035"/>
        <label>2</label>
    </ligand>
</feature>
<feature type="binding site" evidence="1">
    <location>
        <position position="342"/>
    </location>
    <ligand>
        <name>Mn(2+)</name>
        <dbReference type="ChEBI" id="CHEBI:29035"/>
        <label>1</label>
    </ligand>
</feature>
<feature type="binding site" evidence="1">
    <location>
        <position position="344"/>
    </location>
    <ligand>
        <name>Mn(2+)</name>
        <dbReference type="ChEBI" id="CHEBI:29035"/>
        <label>1</label>
    </ligand>
</feature>
<feature type="binding site" evidence="1">
    <location>
        <position position="344"/>
    </location>
    <ligand>
        <name>Mn(2+)</name>
        <dbReference type="ChEBI" id="CHEBI:29035"/>
        <label>2</label>
    </ligand>
</feature>
<proteinExistence type="inferred from homology"/>
<evidence type="ECO:0000255" key="1">
    <source>
        <dbReference type="HAMAP-Rule" id="MF_00181"/>
    </source>
</evidence>
<sequence length="494" mass="53514">MFQVQKELASHEAVVVALFEEEKTSSFVQELDKAFEGQLQVLLEEKELSTKKKAISKVHSLGKTDVKRYYFVGLGKKESYTTETLRSALGKTFKTLQAAKVQDAAILLDSFVTEKLDAIDVAHIAAEVQGLGTYELQTYKSDKKDRVELEKFTAITAEDAQEIEAALTVGYVHGRATNSARTLVNMPPNVLTATKLAEYAVELAEKYDMDYKVLEKEEMEELGMGALLAVNQGSVEPPKMIALIYKGKEEWTDVIGFVGKGITYDTGGYSLKPREGMVGMKGDMGGAAAVLGAMEIIGELRPEQNVIAVIPSTDNVVSGTAFKPDDVITSMSGKTIEVLNTDAEGRLALADGITYAKKLGANYLIDVATLTGGVIVALGNHTTGAMTNNEELFEQVLEASMETDESIWQLPIFDRDKERVRNSKFADLNNSPGREGHAVMAGTFIGEFAEDTPWVHLDIAGTSESSGAHDLGPAGATGAMVRTLATLVERFGEE</sequence>
<organism>
    <name type="scientific">Bacillus anthracis</name>
    <dbReference type="NCBI Taxonomy" id="1392"/>
    <lineage>
        <taxon>Bacteria</taxon>
        <taxon>Bacillati</taxon>
        <taxon>Bacillota</taxon>
        <taxon>Bacilli</taxon>
        <taxon>Bacillales</taxon>
        <taxon>Bacillaceae</taxon>
        <taxon>Bacillus</taxon>
        <taxon>Bacillus cereus group</taxon>
    </lineage>
</organism>
<keyword id="KW-0031">Aminopeptidase</keyword>
<keyword id="KW-0963">Cytoplasm</keyword>
<keyword id="KW-0378">Hydrolase</keyword>
<keyword id="KW-0464">Manganese</keyword>
<keyword id="KW-0479">Metal-binding</keyword>
<keyword id="KW-0645">Protease</keyword>
<keyword id="KW-1185">Reference proteome</keyword>
<gene>
    <name evidence="1" type="primary">pepA</name>
    <name type="ordered locus">BA_5155</name>
    <name type="ordered locus">GBAA_5155</name>
    <name type="ordered locus">BAS4792</name>
</gene>
<dbReference type="EC" id="3.4.11.1" evidence="1"/>
<dbReference type="EC" id="3.4.11.10" evidence="1"/>
<dbReference type="EMBL" id="AE016879">
    <property type="protein sequence ID" value="AAP28827.1"/>
    <property type="molecule type" value="Genomic_DNA"/>
</dbReference>
<dbReference type="EMBL" id="AE017334">
    <property type="protein sequence ID" value="AAT34284.1"/>
    <property type="molecule type" value="Genomic_DNA"/>
</dbReference>
<dbReference type="EMBL" id="AE017225">
    <property type="protein sequence ID" value="AAT57085.1"/>
    <property type="molecule type" value="Genomic_DNA"/>
</dbReference>
<dbReference type="RefSeq" id="NP_847341.1">
    <property type="nucleotide sequence ID" value="NC_003997.3"/>
</dbReference>
<dbReference type="RefSeq" id="WP_000487985.1">
    <property type="nucleotide sequence ID" value="NZ_WXXJ01000017.1"/>
</dbReference>
<dbReference type="RefSeq" id="YP_031035.1">
    <property type="nucleotide sequence ID" value="NC_005945.1"/>
</dbReference>
<dbReference type="SMR" id="Q81XS5"/>
<dbReference type="STRING" id="261594.GBAA_5155"/>
<dbReference type="MEROPS" id="M17.010"/>
<dbReference type="DNASU" id="1084531"/>
<dbReference type="GeneID" id="45024781"/>
<dbReference type="KEGG" id="ban:BA_5155"/>
<dbReference type="KEGG" id="banh:HYU01_25220"/>
<dbReference type="KEGG" id="bar:GBAA_5155"/>
<dbReference type="KEGG" id="bat:BAS4792"/>
<dbReference type="PATRIC" id="fig|198094.11.peg.5116"/>
<dbReference type="eggNOG" id="COG0260">
    <property type="taxonomic scope" value="Bacteria"/>
</dbReference>
<dbReference type="HOGENOM" id="CLU_013734_6_0_9"/>
<dbReference type="OMA" id="WPMPLPE"/>
<dbReference type="OrthoDB" id="9809354at2"/>
<dbReference type="Proteomes" id="UP000000427">
    <property type="component" value="Chromosome"/>
</dbReference>
<dbReference type="Proteomes" id="UP000000594">
    <property type="component" value="Chromosome"/>
</dbReference>
<dbReference type="GO" id="GO:0005737">
    <property type="term" value="C:cytoplasm"/>
    <property type="evidence" value="ECO:0007669"/>
    <property type="project" value="UniProtKB-SubCell"/>
</dbReference>
<dbReference type="GO" id="GO:0030145">
    <property type="term" value="F:manganese ion binding"/>
    <property type="evidence" value="ECO:0007669"/>
    <property type="project" value="UniProtKB-UniRule"/>
</dbReference>
<dbReference type="GO" id="GO:0070006">
    <property type="term" value="F:metalloaminopeptidase activity"/>
    <property type="evidence" value="ECO:0007669"/>
    <property type="project" value="InterPro"/>
</dbReference>
<dbReference type="GO" id="GO:0006508">
    <property type="term" value="P:proteolysis"/>
    <property type="evidence" value="ECO:0007669"/>
    <property type="project" value="UniProtKB-KW"/>
</dbReference>
<dbReference type="CDD" id="cd00433">
    <property type="entry name" value="Peptidase_M17"/>
    <property type="match status" value="1"/>
</dbReference>
<dbReference type="Gene3D" id="3.40.220.10">
    <property type="entry name" value="Leucine Aminopeptidase, subunit E, domain 1"/>
    <property type="match status" value="1"/>
</dbReference>
<dbReference type="Gene3D" id="3.40.630.10">
    <property type="entry name" value="Zn peptidases"/>
    <property type="match status" value="1"/>
</dbReference>
<dbReference type="HAMAP" id="MF_00181">
    <property type="entry name" value="Cytosol_peptidase_M17"/>
    <property type="match status" value="1"/>
</dbReference>
<dbReference type="InterPro" id="IPR011356">
    <property type="entry name" value="Leucine_aapep/pepB"/>
</dbReference>
<dbReference type="InterPro" id="IPR043472">
    <property type="entry name" value="Macro_dom-like"/>
</dbReference>
<dbReference type="InterPro" id="IPR000819">
    <property type="entry name" value="Peptidase_M17_C"/>
</dbReference>
<dbReference type="InterPro" id="IPR023042">
    <property type="entry name" value="Peptidase_M17_leu_NH2_pept"/>
</dbReference>
<dbReference type="InterPro" id="IPR008283">
    <property type="entry name" value="Peptidase_M17_N"/>
</dbReference>
<dbReference type="NCBIfam" id="NF002073">
    <property type="entry name" value="PRK00913.1-2"/>
    <property type="match status" value="1"/>
</dbReference>
<dbReference type="NCBIfam" id="NF002074">
    <property type="entry name" value="PRK00913.1-4"/>
    <property type="match status" value="1"/>
</dbReference>
<dbReference type="NCBIfam" id="NF002083">
    <property type="entry name" value="PRK00913.3-5"/>
    <property type="match status" value="1"/>
</dbReference>
<dbReference type="PANTHER" id="PTHR11963:SF23">
    <property type="entry name" value="CYTOSOL AMINOPEPTIDASE"/>
    <property type="match status" value="1"/>
</dbReference>
<dbReference type="PANTHER" id="PTHR11963">
    <property type="entry name" value="LEUCINE AMINOPEPTIDASE-RELATED"/>
    <property type="match status" value="1"/>
</dbReference>
<dbReference type="Pfam" id="PF00883">
    <property type="entry name" value="Peptidase_M17"/>
    <property type="match status" value="1"/>
</dbReference>
<dbReference type="Pfam" id="PF02789">
    <property type="entry name" value="Peptidase_M17_N"/>
    <property type="match status" value="1"/>
</dbReference>
<dbReference type="PRINTS" id="PR00481">
    <property type="entry name" value="LAMNOPPTDASE"/>
</dbReference>
<dbReference type="SUPFAM" id="SSF52949">
    <property type="entry name" value="Macro domain-like"/>
    <property type="match status" value="1"/>
</dbReference>
<dbReference type="SUPFAM" id="SSF53187">
    <property type="entry name" value="Zn-dependent exopeptidases"/>
    <property type="match status" value="1"/>
</dbReference>
<dbReference type="PROSITE" id="PS00631">
    <property type="entry name" value="CYTOSOL_AP"/>
    <property type="match status" value="1"/>
</dbReference>
<reference key="1">
    <citation type="journal article" date="2003" name="Nature">
        <title>The genome sequence of Bacillus anthracis Ames and comparison to closely related bacteria.</title>
        <authorList>
            <person name="Read T.D."/>
            <person name="Peterson S.N."/>
            <person name="Tourasse N.J."/>
            <person name="Baillie L.W."/>
            <person name="Paulsen I.T."/>
            <person name="Nelson K.E."/>
            <person name="Tettelin H."/>
            <person name="Fouts D.E."/>
            <person name="Eisen J.A."/>
            <person name="Gill S.R."/>
            <person name="Holtzapple E.K."/>
            <person name="Okstad O.A."/>
            <person name="Helgason E."/>
            <person name="Rilstone J."/>
            <person name="Wu M."/>
            <person name="Kolonay J.F."/>
            <person name="Beanan M.J."/>
            <person name="Dodson R.J."/>
            <person name="Brinkac L.M."/>
            <person name="Gwinn M.L."/>
            <person name="DeBoy R.T."/>
            <person name="Madpu R."/>
            <person name="Daugherty S.C."/>
            <person name="Durkin A.S."/>
            <person name="Haft D.H."/>
            <person name="Nelson W.C."/>
            <person name="Peterson J.D."/>
            <person name="Pop M."/>
            <person name="Khouri H.M."/>
            <person name="Radune D."/>
            <person name="Benton J.L."/>
            <person name="Mahamoud Y."/>
            <person name="Jiang L."/>
            <person name="Hance I.R."/>
            <person name="Weidman J.F."/>
            <person name="Berry K.J."/>
            <person name="Plaut R.D."/>
            <person name="Wolf A.M."/>
            <person name="Watkins K.L."/>
            <person name="Nierman W.C."/>
            <person name="Hazen A."/>
            <person name="Cline R.T."/>
            <person name="Redmond C."/>
            <person name="Thwaite J.E."/>
            <person name="White O."/>
            <person name="Salzberg S.L."/>
            <person name="Thomason B."/>
            <person name="Friedlander A.M."/>
            <person name="Koehler T.M."/>
            <person name="Hanna P.C."/>
            <person name="Kolstoe A.-B."/>
            <person name="Fraser C.M."/>
        </authorList>
    </citation>
    <scope>NUCLEOTIDE SEQUENCE [LARGE SCALE GENOMIC DNA]</scope>
    <source>
        <strain>Ames / isolate Porton</strain>
    </source>
</reference>
<reference key="2">
    <citation type="journal article" date="2009" name="J. Bacteriol.">
        <title>The complete genome sequence of Bacillus anthracis Ames 'Ancestor'.</title>
        <authorList>
            <person name="Ravel J."/>
            <person name="Jiang L."/>
            <person name="Stanley S.T."/>
            <person name="Wilson M.R."/>
            <person name="Decker R.S."/>
            <person name="Read T.D."/>
            <person name="Worsham P."/>
            <person name="Keim P.S."/>
            <person name="Salzberg S.L."/>
            <person name="Fraser-Liggett C.M."/>
            <person name="Rasko D.A."/>
        </authorList>
    </citation>
    <scope>NUCLEOTIDE SEQUENCE [LARGE SCALE GENOMIC DNA]</scope>
    <source>
        <strain>Ames ancestor</strain>
    </source>
</reference>
<reference key="3">
    <citation type="submission" date="2004-01" db="EMBL/GenBank/DDBJ databases">
        <title>Complete genome sequence of Bacillus anthracis Sterne.</title>
        <authorList>
            <person name="Brettin T.S."/>
            <person name="Bruce D."/>
            <person name="Challacombe J.F."/>
            <person name="Gilna P."/>
            <person name="Han C."/>
            <person name="Hill K."/>
            <person name="Hitchcock P."/>
            <person name="Jackson P."/>
            <person name="Keim P."/>
            <person name="Longmire J."/>
            <person name="Lucas S."/>
            <person name="Okinaka R."/>
            <person name="Richardson P."/>
            <person name="Rubin E."/>
            <person name="Tice H."/>
        </authorList>
    </citation>
    <scope>NUCLEOTIDE SEQUENCE [LARGE SCALE GENOMIC DNA]</scope>
    <source>
        <strain>Sterne</strain>
    </source>
</reference>
<accession>Q81XS5</accession>
<accession>Q6HRK3</accession>
<accession>Q6KKW8</accession>